<evidence type="ECO:0000269" key="1">
    <source>
    </source>
</evidence>
<evidence type="ECO:0000269" key="2">
    <source>
    </source>
</evidence>
<evidence type="ECO:0000303" key="3">
    <source>
    </source>
</evidence>
<evidence type="ECO:0000305" key="4"/>
<evidence type="ECO:0000305" key="5">
    <source>
    </source>
</evidence>
<evidence type="ECO:0000312" key="6">
    <source>
        <dbReference type="PDB" id="2KGU"/>
    </source>
</evidence>
<evidence type="ECO:0007829" key="7">
    <source>
        <dbReference type="PDB" id="2KGU"/>
    </source>
</evidence>
<protein>
    <recommendedName>
        <fullName evidence="3">Purotoxin-1</fullName>
        <shortName evidence="3">PT1</shortName>
    </recommendedName>
    <alternativeName>
        <fullName evidence="4">OMICRON-lycotoxin-Am1a</fullName>
        <shortName evidence="4">OMICRON-LCTX-Am1a</shortName>
    </alternativeName>
</protein>
<proteinExistence type="evidence at protein level"/>
<comment type="function">
    <text evidence="1 2">Inhibits P2RX3 receptors. Has an analgesic effect in rat. Enhances the high-affinity desensitization of P2RX3 purinoceptors. At 50 nM, decreases the IC(50) for ambient ATP from 46.5 nM to 12.7 nM in mouse P2RX3.</text>
</comment>
<comment type="subcellular location">
    <subcellularLocation>
        <location evidence="1">Secreted</location>
    </subcellularLocation>
</comment>
<comment type="tissue specificity">
    <text evidence="5">Expressed by the venom gland.</text>
</comment>
<comment type="domain">
    <text evidence="1">The presence of a 'disulfide through disulfide knot' structurally defines this protein as a knottin.</text>
</comment>
<comment type="miscellaneous">
    <text evidence="2">Negative results: does not affect mouse P2RX2 or P2RX2/P2RX3 receptors.</text>
</comment>
<comment type="similarity">
    <text evidence="4">Belongs to the neurotoxin 33 family.</text>
</comment>
<accession>P86269</accession>
<sequence length="35" mass="3845">GYCAEKGIRCDDIHCCTGLKCKCNASGYNCVCRKK</sequence>
<keyword id="KW-0002">3D-structure</keyword>
<keyword id="KW-0108">Calcium channel impairing toxin</keyword>
<keyword id="KW-0903">Direct protein sequencing</keyword>
<keyword id="KW-1015">Disulfide bond</keyword>
<keyword id="KW-0872">Ion channel impairing toxin</keyword>
<keyword id="KW-0960">Knottin</keyword>
<keyword id="KW-0528">Neurotoxin</keyword>
<keyword id="KW-0964">Secreted</keyword>
<keyword id="KW-0800">Toxin</keyword>
<feature type="peptide" id="PRO_0000395427" description="Purotoxin-1" evidence="1">
    <location>
        <begin position="1"/>
        <end position="35"/>
    </location>
</feature>
<feature type="disulfide bond" evidence="1 6">
    <location>
        <begin position="3"/>
        <end position="16"/>
    </location>
</feature>
<feature type="disulfide bond" evidence="1 6">
    <location>
        <begin position="10"/>
        <end position="21"/>
    </location>
</feature>
<feature type="disulfide bond" evidence="1 6">
    <location>
        <begin position="15"/>
        <end position="32"/>
    </location>
</feature>
<feature type="disulfide bond" evidence="1 6">
    <location>
        <begin position="23"/>
        <end position="30"/>
    </location>
</feature>
<feature type="strand" evidence="7">
    <location>
        <begin position="11"/>
        <end position="13"/>
    </location>
</feature>
<feature type="strand" evidence="7">
    <location>
        <begin position="20"/>
        <end position="22"/>
    </location>
</feature>
<feature type="strand" evidence="7">
    <location>
        <begin position="25"/>
        <end position="27"/>
    </location>
</feature>
<feature type="strand" evidence="7">
    <location>
        <begin position="31"/>
        <end position="33"/>
    </location>
</feature>
<organism>
    <name type="scientific">Alopecosa marikovskyi</name>
    <name type="common">Wolf spider</name>
    <name type="synonym">Lycosa kazakhstanicus</name>
    <dbReference type="NCBI Taxonomy" id="2066572"/>
    <lineage>
        <taxon>Eukaryota</taxon>
        <taxon>Metazoa</taxon>
        <taxon>Ecdysozoa</taxon>
        <taxon>Arthropoda</taxon>
        <taxon>Chelicerata</taxon>
        <taxon>Arachnida</taxon>
        <taxon>Araneae</taxon>
        <taxon>Araneomorphae</taxon>
        <taxon>Entelegynae</taxon>
        <taxon>Lycosoidea</taxon>
        <taxon>Lycosidae</taxon>
        <taxon>Alopecosa</taxon>
    </lineage>
</organism>
<dbReference type="PDB" id="2KGU">
    <property type="method" value="NMR"/>
    <property type="chains" value="A=1-35"/>
</dbReference>
<dbReference type="PDBsum" id="2KGU"/>
<dbReference type="SMR" id="P86269"/>
<dbReference type="EvolutionaryTrace" id="P86269"/>
<dbReference type="GO" id="GO:0005576">
    <property type="term" value="C:extracellular region"/>
    <property type="evidence" value="ECO:0007669"/>
    <property type="project" value="UniProtKB-SubCell"/>
</dbReference>
<dbReference type="GO" id="GO:0019855">
    <property type="term" value="F:calcium channel inhibitor activity"/>
    <property type="evidence" value="ECO:0000314"/>
    <property type="project" value="UniProtKB"/>
</dbReference>
<dbReference type="GO" id="GO:0090729">
    <property type="term" value="F:toxin activity"/>
    <property type="evidence" value="ECO:0007669"/>
    <property type="project" value="UniProtKB-KW"/>
</dbReference>
<dbReference type="CDD" id="cd12960">
    <property type="entry name" value="Spider_toxin"/>
    <property type="match status" value="1"/>
</dbReference>
<dbReference type="InterPro" id="IPR004169">
    <property type="entry name" value="Spidertoxin"/>
</dbReference>
<reference key="1">
    <citation type="journal article" date="2010" name="Ann. Neurol.">
        <title>Novel peptide from spider venom inhibits P2X3 receptors and inflammatory pain.</title>
        <authorList>
            <person name="Grishin E.V."/>
            <person name="Savchenko G.A."/>
            <person name="Vassilevski A.A."/>
            <person name="Korolkova Y.V."/>
            <person name="Boychuk Y.A."/>
            <person name="Viatchenko-Karpinski V.Y."/>
            <person name="Nadezhdin K.D."/>
            <person name="Arseniev A.S."/>
            <person name="Pluzhnikov K.A."/>
            <person name="Kulyk V.B."/>
            <person name="Voitenko N.V."/>
            <person name="Krishtal O.O."/>
        </authorList>
    </citation>
    <scope>PROTEIN SEQUENCE</scope>
    <scope>STRUCTURE BY NMR</scope>
    <scope>FUNCTION</scope>
    <scope>SUBCELLULAR LOCATION</scope>
    <scope>DISULFIDE BONDS</scope>
    <source>
        <tissue>Venom</tissue>
    </source>
</reference>
<reference key="2">
    <citation type="journal article" date="2012" name="Biochim. Biophys. Acta">
        <title>Modulation of P2X3 receptors by spider toxins.</title>
        <authorList>
            <person name="Kabanova N.V."/>
            <person name="Vassilevski A.A."/>
            <person name="Rogachevskaja O.A."/>
            <person name="Bystrova M.F."/>
            <person name="Korolkova Y.V."/>
            <person name="Pluzhnikov K.A."/>
            <person name="Romanov R.A."/>
            <person name="Grishin E.V."/>
            <person name="Kolesnikov S.S."/>
        </authorList>
    </citation>
    <scope>FUNCTION</scope>
</reference>
<name>TXPR1_ALOMR</name>